<accession>A5I7P4</accession>
<accession>A7G8X6</accession>
<feature type="chain" id="PRO_1000101110" description="Lysine--tRNA ligase">
    <location>
        <begin position="1"/>
        <end position="504"/>
    </location>
</feature>
<feature type="binding site" evidence="1">
    <location>
        <position position="411"/>
    </location>
    <ligand>
        <name>Mg(2+)</name>
        <dbReference type="ChEBI" id="CHEBI:18420"/>
        <label>1</label>
    </ligand>
</feature>
<feature type="binding site" evidence="1">
    <location>
        <position position="418"/>
    </location>
    <ligand>
        <name>Mg(2+)</name>
        <dbReference type="ChEBI" id="CHEBI:18420"/>
        <label>1</label>
    </ligand>
</feature>
<feature type="binding site" evidence="1">
    <location>
        <position position="418"/>
    </location>
    <ligand>
        <name>Mg(2+)</name>
        <dbReference type="ChEBI" id="CHEBI:18420"/>
        <label>2</label>
    </ligand>
</feature>
<reference key="1">
    <citation type="journal article" date="2007" name="Genome Res.">
        <title>Genome sequence of a proteolytic (Group I) Clostridium botulinum strain Hall A and comparative analysis of the clostridial genomes.</title>
        <authorList>
            <person name="Sebaihia M."/>
            <person name="Peck M.W."/>
            <person name="Minton N.P."/>
            <person name="Thomson N.R."/>
            <person name="Holden M.T.G."/>
            <person name="Mitchell W.J."/>
            <person name="Carter A.T."/>
            <person name="Bentley S.D."/>
            <person name="Mason D.R."/>
            <person name="Crossman L."/>
            <person name="Paul C.J."/>
            <person name="Ivens A."/>
            <person name="Wells-Bennik M.H.J."/>
            <person name="Davis I.J."/>
            <person name="Cerdeno-Tarraga A.M."/>
            <person name="Churcher C."/>
            <person name="Quail M.A."/>
            <person name="Chillingworth T."/>
            <person name="Feltwell T."/>
            <person name="Fraser A."/>
            <person name="Goodhead I."/>
            <person name="Hance Z."/>
            <person name="Jagels K."/>
            <person name="Larke N."/>
            <person name="Maddison M."/>
            <person name="Moule S."/>
            <person name="Mungall K."/>
            <person name="Norbertczak H."/>
            <person name="Rabbinowitsch E."/>
            <person name="Sanders M."/>
            <person name="Simmonds M."/>
            <person name="White B."/>
            <person name="Whithead S."/>
            <person name="Parkhill J."/>
        </authorList>
    </citation>
    <scope>NUCLEOTIDE SEQUENCE [LARGE SCALE GENOMIC DNA]</scope>
    <source>
        <strain>Hall / ATCC 3502 / NCTC 13319 / Type A</strain>
    </source>
</reference>
<reference key="2">
    <citation type="journal article" date="2007" name="PLoS ONE">
        <title>Analysis of the neurotoxin complex genes in Clostridium botulinum A1-A4 and B1 strains: BoNT/A3, /Ba4 and /B1 clusters are located within plasmids.</title>
        <authorList>
            <person name="Smith T.J."/>
            <person name="Hill K.K."/>
            <person name="Foley B.T."/>
            <person name="Detter J.C."/>
            <person name="Munk A.C."/>
            <person name="Bruce D.C."/>
            <person name="Doggett N.A."/>
            <person name="Smith L.A."/>
            <person name="Marks J.D."/>
            <person name="Xie G."/>
            <person name="Brettin T.S."/>
        </authorList>
    </citation>
    <scope>NUCLEOTIDE SEQUENCE [LARGE SCALE GENOMIC DNA]</scope>
    <source>
        <strain>Hall / ATCC 3502 / NCTC 13319 / Type A</strain>
    </source>
</reference>
<keyword id="KW-0030">Aminoacyl-tRNA synthetase</keyword>
<keyword id="KW-0067">ATP-binding</keyword>
<keyword id="KW-0963">Cytoplasm</keyword>
<keyword id="KW-0436">Ligase</keyword>
<keyword id="KW-0460">Magnesium</keyword>
<keyword id="KW-0479">Metal-binding</keyword>
<keyword id="KW-0547">Nucleotide-binding</keyword>
<keyword id="KW-0648">Protein biosynthesis</keyword>
<keyword id="KW-1185">Reference proteome</keyword>
<organism>
    <name type="scientific">Clostridium botulinum (strain Hall / ATCC 3502 / NCTC 13319 / Type A)</name>
    <dbReference type="NCBI Taxonomy" id="441771"/>
    <lineage>
        <taxon>Bacteria</taxon>
        <taxon>Bacillati</taxon>
        <taxon>Bacillota</taxon>
        <taxon>Clostridia</taxon>
        <taxon>Eubacteriales</taxon>
        <taxon>Clostridiaceae</taxon>
        <taxon>Clostridium</taxon>
    </lineage>
</organism>
<gene>
    <name evidence="1" type="primary">lysS</name>
    <name type="ordered locus">CBO3518</name>
    <name type="ordered locus">CLC_3482</name>
</gene>
<dbReference type="EC" id="6.1.1.6" evidence="1"/>
<dbReference type="EMBL" id="CP000727">
    <property type="protein sequence ID" value="ABS38115.1"/>
    <property type="molecule type" value="Genomic_DNA"/>
</dbReference>
<dbReference type="EMBL" id="AM412317">
    <property type="protein sequence ID" value="CAL85079.1"/>
    <property type="molecule type" value="Genomic_DNA"/>
</dbReference>
<dbReference type="RefSeq" id="WP_012048371.1">
    <property type="nucleotide sequence ID" value="NC_009698.1"/>
</dbReference>
<dbReference type="RefSeq" id="YP_001256000.1">
    <property type="nucleotide sequence ID" value="NC_009495.1"/>
</dbReference>
<dbReference type="RefSeq" id="YP_001389241.1">
    <property type="nucleotide sequence ID" value="NC_009698.1"/>
</dbReference>
<dbReference type="SMR" id="A5I7P4"/>
<dbReference type="GeneID" id="5187733"/>
<dbReference type="KEGG" id="cbh:CLC_3482"/>
<dbReference type="KEGG" id="cbo:CBO3518"/>
<dbReference type="PATRIC" id="fig|413999.7.peg.3496"/>
<dbReference type="HOGENOM" id="CLU_008255_6_0_9"/>
<dbReference type="PRO" id="PR:A5I7P4"/>
<dbReference type="Proteomes" id="UP000001986">
    <property type="component" value="Chromosome"/>
</dbReference>
<dbReference type="GO" id="GO:0005737">
    <property type="term" value="C:cytoplasm"/>
    <property type="evidence" value="ECO:0007669"/>
    <property type="project" value="UniProtKB-SubCell"/>
</dbReference>
<dbReference type="GO" id="GO:0004815">
    <property type="term" value="F:aspartate-tRNA ligase activity"/>
    <property type="evidence" value="ECO:0000318"/>
    <property type="project" value="GO_Central"/>
</dbReference>
<dbReference type="GO" id="GO:0005524">
    <property type="term" value="F:ATP binding"/>
    <property type="evidence" value="ECO:0007669"/>
    <property type="project" value="UniProtKB-UniRule"/>
</dbReference>
<dbReference type="GO" id="GO:0140096">
    <property type="term" value="F:catalytic activity, acting on a protein"/>
    <property type="evidence" value="ECO:0007669"/>
    <property type="project" value="UniProtKB-ARBA"/>
</dbReference>
<dbReference type="GO" id="GO:0004824">
    <property type="term" value="F:lysine-tRNA ligase activity"/>
    <property type="evidence" value="ECO:0007669"/>
    <property type="project" value="UniProtKB-UniRule"/>
</dbReference>
<dbReference type="GO" id="GO:0000287">
    <property type="term" value="F:magnesium ion binding"/>
    <property type="evidence" value="ECO:0007669"/>
    <property type="project" value="UniProtKB-UniRule"/>
</dbReference>
<dbReference type="GO" id="GO:0003676">
    <property type="term" value="F:nucleic acid binding"/>
    <property type="evidence" value="ECO:0007669"/>
    <property type="project" value="InterPro"/>
</dbReference>
<dbReference type="GO" id="GO:0016740">
    <property type="term" value="F:transferase activity"/>
    <property type="evidence" value="ECO:0007669"/>
    <property type="project" value="UniProtKB-ARBA"/>
</dbReference>
<dbReference type="GO" id="GO:0006422">
    <property type="term" value="P:aspartyl-tRNA aminoacylation"/>
    <property type="evidence" value="ECO:0000318"/>
    <property type="project" value="GO_Central"/>
</dbReference>
<dbReference type="GO" id="GO:0006430">
    <property type="term" value="P:lysyl-tRNA aminoacylation"/>
    <property type="evidence" value="ECO:0007669"/>
    <property type="project" value="UniProtKB-UniRule"/>
</dbReference>
<dbReference type="CDD" id="cd00775">
    <property type="entry name" value="LysRS_core"/>
    <property type="match status" value="1"/>
</dbReference>
<dbReference type="CDD" id="cd04322">
    <property type="entry name" value="LysRS_N"/>
    <property type="match status" value="1"/>
</dbReference>
<dbReference type="FunFam" id="2.40.50.140:FF:000024">
    <property type="entry name" value="Lysine--tRNA ligase"/>
    <property type="match status" value="1"/>
</dbReference>
<dbReference type="FunFam" id="3.30.930.10:FF:000001">
    <property type="entry name" value="Lysine--tRNA ligase"/>
    <property type="match status" value="1"/>
</dbReference>
<dbReference type="Gene3D" id="3.30.930.10">
    <property type="entry name" value="Bira Bifunctional Protein, Domain 2"/>
    <property type="match status" value="1"/>
</dbReference>
<dbReference type="Gene3D" id="2.40.50.140">
    <property type="entry name" value="Nucleic acid-binding proteins"/>
    <property type="match status" value="1"/>
</dbReference>
<dbReference type="HAMAP" id="MF_00252">
    <property type="entry name" value="Lys_tRNA_synth_class2"/>
    <property type="match status" value="1"/>
</dbReference>
<dbReference type="InterPro" id="IPR004364">
    <property type="entry name" value="Aa-tRNA-synt_II"/>
</dbReference>
<dbReference type="InterPro" id="IPR006195">
    <property type="entry name" value="aa-tRNA-synth_II"/>
</dbReference>
<dbReference type="InterPro" id="IPR045864">
    <property type="entry name" value="aa-tRNA-synth_II/BPL/LPL"/>
</dbReference>
<dbReference type="InterPro" id="IPR002313">
    <property type="entry name" value="Lys-tRNA-ligase_II"/>
</dbReference>
<dbReference type="InterPro" id="IPR034762">
    <property type="entry name" value="Lys-tRNA-ligase_II_bac/euk"/>
</dbReference>
<dbReference type="InterPro" id="IPR044136">
    <property type="entry name" value="Lys-tRNA-ligase_II_N"/>
</dbReference>
<dbReference type="InterPro" id="IPR018149">
    <property type="entry name" value="Lys-tRNA-synth_II_C"/>
</dbReference>
<dbReference type="InterPro" id="IPR012340">
    <property type="entry name" value="NA-bd_OB-fold"/>
</dbReference>
<dbReference type="InterPro" id="IPR004365">
    <property type="entry name" value="NA-bd_OB_tRNA"/>
</dbReference>
<dbReference type="NCBIfam" id="TIGR00499">
    <property type="entry name" value="lysS_bact"/>
    <property type="match status" value="1"/>
</dbReference>
<dbReference type="NCBIfam" id="NF001756">
    <property type="entry name" value="PRK00484.1"/>
    <property type="match status" value="1"/>
</dbReference>
<dbReference type="PANTHER" id="PTHR42918:SF15">
    <property type="entry name" value="LYSINE--TRNA LIGASE, CHLOROPLASTIC_MITOCHONDRIAL"/>
    <property type="match status" value="1"/>
</dbReference>
<dbReference type="PANTHER" id="PTHR42918">
    <property type="entry name" value="LYSYL-TRNA SYNTHETASE"/>
    <property type="match status" value="1"/>
</dbReference>
<dbReference type="Pfam" id="PF00152">
    <property type="entry name" value="tRNA-synt_2"/>
    <property type="match status" value="1"/>
</dbReference>
<dbReference type="Pfam" id="PF01336">
    <property type="entry name" value="tRNA_anti-codon"/>
    <property type="match status" value="1"/>
</dbReference>
<dbReference type="PIRSF" id="PIRSF039101">
    <property type="entry name" value="LysRS2"/>
    <property type="match status" value="1"/>
</dbReference>
<dbReference type="PRINTS" id="PR00982">
    <property type="entry name" value="TRNASYNTHLYS"/>
</dbReference>
<dbReference type="SUPFAM" id="SSF55681">
    <property type="entry name" value="Class II aaRS and biotin synthetases"/>
    <property type="match status" value="1"/>
</dbReference>
<dbReference type="SUPFAM" id="SSF50249">
    <property type="entry name" value="Nucleic acid-binding proteins"/>
    <property type="match status" value="1"/>
</dbReference>
<dbReference type="PROSITE" id="PS50862">
    <property type="entry name" value="AA_TRNA_LIGASE_II"/>
    <property type="match status" value="1"/>
</dbReference>
<comment type="catalytic activity">
    <reaction evidence="1">
        <text>tRNA(Lys) + L-lysine + ATP = L-lysyl-tRNA(Lys) + AMP + diphosphate</text>
        <dbReference type="Rhea" id="RHEA:20792"/>
        <dbReference type="Rhea" id="RHEA-COMP:9696"/>
        <dbReference type="Rhea" id="RHEA-COMP:9697"/>
        <dbReference type="ChEBI" id="CHEBI:30616"/>
        <dbReference type="ChEBI" id="CHEBI:32551"/>
        <dbReference type="ChEBI" id="CHEBI:33019"/>
        <dbReference type="ChEBI" id="CHEBI:78442"/>
        <dbReference type="ChEBI" id="CHEBI:78529"/>
        <dbReference type="ChEBI" id="CHEBI:456215"/>
        <dbReference type="EC" id="6.1.1.6"/>
    </reaction>
</comment>
<comment type="cofactor">
    <cofactor evidence="1">
        <name>Mg(2+)</name>
        <dbReference type="ChEBI" id="CHEBI:18420"/>
    </cofactor>
    <text evidence="1">Binds 3 Mg(2+) ions per subunit.</text>
</comment>
<comment type="subunit">
    <text evidence="1">Homodimer.</text>
</comment>
<comment type="subcellular location">
    <subcellularLocation>
        <location evidence="1">Cytoplasm</location>
    </subcellularLocation>
</comment>
<comment type="similarity">
    <text evidence="1">Belongs to the class-II aminoacyl-tRNA synthetase family.</text>
</comment>
<proteinExistence type="inferred from homology"/>
<evidence type="ECO:0000255" key="1">
    <source>
        <dbReference type="HAMAP-Rule" id="MF_00252"/>
    </source>
</evidence>
<sequence length="504" mass="58444">MSKEDNVMNSFEEQANELMKERFQKLKELQSNGKDPFDVYKVERTHTSKEVKENYEDLEGKTVTVAGRLMSKRVHGKAGFSDIHDRYGKIQLYIKINDVGEEKLKEYKTFDIGDIISVTGTVFKTKTGETSIHITDFQLVCKSLRPLPEKWHGLKDPDLRYRQRYVDLIINQDVRDTFMKRTAIIKTMREYLDNKGFLEVETPILSPIAGGAAAKPFITHHNALNIDMYLRIATELYLKRLIVGGFEKVYEIGRNFRNEGMDIRHNPEFTVIELYEAYADYNDMMEITENMIAYICEKVLGTTKVQYEGTEIDFTPPWRRLTMVDAVREYAGVDFNTIKDDIEARTIAKEKHIEFKKELKDCTKGDVLIGLFEEFCEDKLMQPTFICDYPVENSPLTKKKRGNEAFTERFEGFVFGREVCNAYSELNDSIVQKERFMQQLKERELGDDEAYMMDDDFITSLEVGMPPTGGLGIGIDRLIMFLTDTHSIRDVILFPTMKPQPNNQ</sequence>
<protein>
    <recommendedName>
        <fullName evidence="1">Lysine--tRNA ligase</fullName>
        <ecNumber evidence="1">6.1.1.6</ecNumber>
    </recommendedName>
    <alternativeName>
        <fullName evidence="1">Lysyl-tRNA synthetase</fullName>
        <shortName evidence="1">LysRS</shortName>
    </alternativeName>
</protein>
<name>SYK_CLOBH</name>